<name>M1_I86A3</name>
<protein>
    <recommendedName>
        <fullName evidence="1">Matrix protein 1</fullName>
        <shortName evidence="1">M1</shortName>
    </recommendedName>
</protein>
<organism>
    <name type="scientific">Influenza A virus (strain A/Equine/Tennessee/5/1986 H3N8)</name>
    <dbReference type="NCBI Taxonomy" id="380339"/>
    <lineage>
        <taxon>Viruses</taxon>
        <taxon>Riboviria</taxon>
        <taxon>Orthornavirae</taxon>
        <taxon>Negarnaviricota</taxon>
        <taxon>Polyploviricotina</taxon>
        <taxon>Insthoviricetes</taxon>
        <taxon>Articulavirales</taxon>
        <taxon>Orthomyxoviridae</taxon>
        <taxon>Alphainfluenzavirus</taxon>
        <taxon>Alphainfluenzavirus influenzae</taxon>
        <taxon>Influenza A virus</taxon>
    </lineage>
</organism>
<comment type="function">
    <text evidence="1">Plays critical roles in virus replication, from virus entry and uncoating to assembly and budding of the virus particle. M1 binding to ribonucleocapsids (RNPs) in nucleus seems to inhibit viral transcription. Interaction of viral NEP with M1-RNP is thought to promote nuclear export of the complex, which is targeted to the virion assembly site at the apical plasma membrane in polarized epithelial cells. Interactions with NA and HA may bring M1, a non-raft-associated protein, into lipid rafts. Forms a continuous shell on the inner side of the lipid bilayer in virion, where it binds the RNP. During virus entry into cell, the M2 ion channel acidifies the internal virion core, inducing M1 dissociation from the RNP. M1-free RNPs are transported to the nucleus, where viral transcription and replication can take place.</text>
</comment>
<comment type="function">
    <text evidence="1">Determines the virion's shape: spherical or filamentous. Clinical isolates of influenza are characterized by the presence of significant proportion of filamentous virions, whereas after multiple passage on eggs or cell culture, virions have only spherical morphology. Filamentous virions are thought to be important to infect neighboring cells, and spherical virions more suited to spread through aerosol between hosts organisms.</text>
</comment>
<comment type="subunit">
    <text evidence="1">Homodimer and homomultimer. Interacts with NEP. Binds ribonucleocapsid by both interacting with genomic RNA and NP protein. May interact with HA and NA. Cannot bind NP without genomic RNA.</text>
</comment>
<comment type="subcellular location">
    <subcellularLocation>
        <location evidence="1">Virion membrane</location>
        <topology evidence="1">Peripheral membrane protein</topology>
        <orientation evidence="1">Cytoplasmic side</orientation>
    </subcellularLocation>
    <subcellularLocation>
        <location evidence="1">Host nucleus</location>
    </subcellularLocation>
</comment>
<comment type="alternative products">
    <event type="alternative splicing"/>
    <isoform>
        <id>Q67173-1</id>
        <name>M1</name>
        <sequence type="displayed"/>
    </isoform>
    <isoform>
        <id>Q67172-1</id>
        <name>M2</name>
        <sequence type="external"/>
    </isoform>
    <text>Only the first 9 residues are shared by the 2 isoforms.</text>
</comment>
<comment type="miscellaneous">
    <text evidence="1">Most abundant protein in virion. When expressed alone can form virus-like particles in transfected cells.</text>
</comment>
<comment type="similarity">
    <text evidence="1">Belongs to the influenza viruses Matrix protein M1 family.</text>
</comment>
<sequence>MSLLTEVETYVLSIVPSGPLKAEIAQRLEDVFAGKNTDLEALMEWLKTRPILSPLTKGILGFVFTLTVPSERGLQRRRFVQNALSGNGDPNNMDRAVKLYRKLKREITFHGAKEVALSYSTGALASCMGLIYNRMGTVTTEVAFGLVCATCEQIADSQHRSHRQMVTTTNPLIRHENRMVLASTTAKAMEQMAGSSEQAAEAMEVASKARQMVQAMRTIGTHPSSSAGLKDDLLENLQAYQKRMGVQMQRFK</sequence>
<accession>Q67173</accession>
<proteinExistence type="inferred from homology"/>
<gene>
    <name evidence="1" type="primary">M</name>
</gene>
<organismHost>
    <name type="scientific">Aves</name>
    <dbReference type="NCBI Taxonomy" id="8782"/>
</organismHost>
<organismHost>
    <name type="scientific">Equus caballus</name>
    <name type="common">Horse</name>
    <dbReference type="NCBI Taxonomy" id="9796"/>
</organismHost>
<evidence type="ECO:0000255" key="1">
    <source>
        <dbReference type="HAMAP-Rule" id="MF_04068"/>
    </source>
</evidence>
<feature type="chain" id="PRO_0000326326" description="Matrix protein 1">
    <location>
        <begin position="1"/>
        <end position="252"/>
    </location>
</feature>
<feature type="region of interest" description="Membrane-binding" evidence="1">
    <location>
        <begin position="1"/>
        <end position="164"/>
    </location>
</feature>
<feature type="region of interest" description="RNP-binding" evidence="1">
    <location>
        <begin position="165"/>
        <end position="252"/>
    </location>
</feature>
<feature type="short sequence motif" description="Nuclear localization signal" evidence="1">
    <location>
        <begin position="101"/>
        <end position="105"/>
    </location>
</feature>
<reference key="1">
    <citation type="journal article" date="1991" name="J. Virol.">
        <title>Evolutionary analysis of the influenza A virus M gene with comparison of the M1 and M2 proteins.</title>
        <authorList>
            <person name="Ito T."/>
            <person name="Gorman O.T."/>
            <person name="Kawaoka Y."/>
            <person name="Bean W.J."/>
            <person name="Webster R.G."/>
        </authorList>
    </citation>
    <scope>NUCLEOTIDE SEQUENCE [GENOMIC RNA]</scope>
</reference>
<dbReference type="EMBL" id="M63529">
    <property type="protein sequence ID" value="AAA43292.1"/>
    <property type="molecule type" value="Genomic_RNA"/>
</dbReference>
<dbReference type="SMR" id="Q67173"/>
<dbReference type="GO" id="GO:0042025">
    <property type="term" value="C:host cell nucleus"/>
    <property type="evidence" value="ECO:0007669"/>
    <property type="project" value="UniProtKB-SubCell"/>
</dbReference>
<dbReference type="GO" id="GO:0016020">
    <property type="term" value="C:membrane"/>
    <property type="evidence" value="ECO:0007669"/>
    <property type="project" value="UniProtKB-KW"/>
</dbReference>
<dbReference type="GO" id="GO:0055036">
    <property type="term" value="C:virion membrane"/>
    <property type="evidence" value="ECO:0007669"/>
    <property type="project" value="UniProtKB-SubCell"/>
</dbReference>
<dbReference type="GO" id="GO:0003723">
    <property type="term" value="F:RNA binding"/>
    <property type="evidence" value="ECO:0007669"/>
    <property type="project" value="UniProtKB-UniRule"/>
</dbReference>
<dbReference type="GO" id="GO:0039660">
    <property type="term" value="F:structural constituent of virion"/>
    <property type="evidence" value="ECO:0007669"/>
    <property type="project" value="UniProtKB-UniRule"/>
</dbReference>
<dbReference type="GO" id="GO:0046761">
    <property type="term" value="P:viral budding from plasma membrane"/>
    <property type="evidence" value="ECO:0007669"/>
    <property type="project" value="UniProtKB-UniRule"/>
</dbReference>
<dbReference type="FunFam" id="1.10.10.180:FF:000001">
    <property type="entry name" value="Matrix protein 1"/>
    <property type="match status" value="1"/>
</dbReference>
<dbReference type="FunFam" id="1.20.91.10:FF:000001">
    <property type="entry name" value="Matrix protein 1"/>
    <property type="match status" value="1"/>
</dbReference>
<dbReference type="Gene3D" id="1.10.10.180">
    <property type="match status" value="1"/>
</dbReference>
<dbReference type="Gene3D" id="1.20.91.10">
    <property type="match status" value="1"/>
</dbReference>
<dbReference type="HAMAP" id="MF_04068">
    <property type="entry name" value="INFV_M1"/>
    <property type="match status" value="1"/>
</dbReference>
<dbReference type="InterPro" id="IPR036039">
    <property type="entry name" value="Flu_matrix_M1"/>
</dbReference>
<dbReference type="InterPro" id="IPR013188">
    <property type="entry name" value="Flu_matrix_M1_C"/>
</dbReference>
<dbReference type="InterPro" id="IPR001561">
    <property type="entry name" value="Flu_matrix_M1_N"/>
</dbReference>
<dbReference type="InterPro" id="IPR015423">
    <property type="entry name" value="Flu_matrix_M1_N_sub1"/>
</dbReference>
<dbReference type="InterPro" id="IPR015799">
    <property type="entry name" value="Flu_matrix_M1_N_sub2"/>
</dbReference>
<dbReference type="InterPro" id="IPR037533">
    <property type="entry name" value="INFV_M1"/>
</dbReference>
<dbReference type="Pfam" id="PF00598">
    <property type="entry name" value="Flu_M1"/>
    <property type="match status" value="1"/>
</dbReference>
<dbReference type="Pfam" id="PF08289">
    <property type="entry name" value="Flu_M1_C"/>
    <property type="match status" value="1"/>
</dbReference>
<dbReference type="SMART" id="SM00759">
    <property type="entry name" value="Flu_M1_C"/>
    <property type="match status" value="1"/>
</dbReference>
<dbReference type="SUPFAM" id="SSF48145">
    <property type="entry name" value="Influenza virus matrix protein M1"/>
    <property type="match status" value="1"/>
</dbReference>
<keyword id="KW-0025">Alternative splicing</keyword>
<keyword id="KW-1048">Host nucleus</keyword>
<keyword id="KW-0472">Membrane</keyword>
<keyword id="KW-0694">RNA-binding</keyword>
<keyword id="KW-0468">Viral matrix protein</keyword>
<keyword id="KW-0946">Virion</keyword>